<keyword id="KW-1015">Disulfide bond</keyword>
<keyword id="KW-0325">Glycoprotein</keyword>
<keyword id="KW-0393">Immunoglobulin domain</keyword>
<keyword id="KW-0472">Membrane</keyword>
<keyword id="KW-1185">Reference proteome</keyword>
<keyword id="KW-0677">Repeat</keyword>
<keyword id="KW-0732">Signal</keyword>
<keyword id="KW-0812">Transmembrane</keyword>
<keyword id="KW-1133">Transmembrane helix</keyword>
<dbReference type="EMBL" id="CU638770">
    <property type="protein sequence ID" value="CAP71919.1"/>
    <property type="molecule type" value="mRNA"/>
</dbReference>
<dbReference type="RefSeq" id="NP_001093564.2">
    <property type="nucleotide sequence ID" value="NM_001100094.2"/>
</dbReference>
<dbReference type="FunCoup" id="B0CLX4">
    <property type="interactions" value="1577"/>
</dbReference>
<dbReference type="STRING" id="7955.ENSDARP00000133069"/>
<dbReference type="GlyCosmos" id="B0CLX4">
    <property type="glycosylation" value="13 sites, No reported glycans"/>
</dbReference>
<dbReference type="PaxDb" id="7955-ENSDARP00000075935"/>
<dbReference type="PeptideAtlas" id="B0CLX4"/>
<dbReference type="GeneID" id="100005564"/>
<dbReference type="KEGG" id="dre:100005564"/>
<dbReference type="AGR" id="ZFIN:ZDB-GENE-030131-7476"/>
<dbReference type="CTD" id="54621"/>
<dbReference type="ZFIN" id="ZDB-GENE-030131-7476">
    <property type="gene designation" value="vsig10"/>
</dbReference>
<dbReference type="eggNOG" id="ENOG502R53I">
    <property type="taxonomic scope" value="Eukaryota"/>
</dbReference>
<dbReference type="InParanoid" id="B0CLX4"/>
<dbReference type="OrthoDB" id="9043395at2759"/>
<dbReference type="PhylomeDB" id="B0CLX4"/>
<dbReference type="PRO" id="PR:B0CLX4"/>
<dbReference type="Proteomes" id="UP000000437">
    <property type="component" value="Alternate scaffold 5"/>
</dbReference>
<dbReference type="Proteomes" id="UP000000437">
    <property type="component" value="Chromosome 5"/>
</dbReference>
<dbReference type="GO" id="GO:0016020">
    <property type="term" value="C:membrane"/>
    <property type="evidence" value="ECO:0007669"/>
    <property type="project" value="UniProtKB-SubCell"/>
</dbReference>
<dbReference type="GO" id="GO:0043005">
    <property type="term" value="C:neuron projection"/>
    <property type="evidence" value="ECO:0000318"/>
    <property type="project" value="GO_Central"/>
</dbReference>
<dbReference type="Gene3D" id="2.60.40.10">
    <property type="entry name" value="Immunoglobulins"/>
    <property type="match status" value="4"/>
</dbReference>
<dbReference type="InterPro" id="IPR051275">
    <property type="entry name" value="Cell_adhesion_signaling"/>
</dbReference>
<dbReference type="InterPro" id="IPR007110">
    <property type="entry name" value="Ig-like_dom"/>
</dbReference>
<dbReference type="InterPro" id="IPR036179">
    <property type="entry name" value="Ig-like_dom_sf"/>
</dbReference>
<dbReference type="InterPro" id="IPR013783">
    <property type="entry name" value="Ig-like_fold"/>
</dbReference>
<dbReference type="InterPro" id="IPR013098">
    <property type="entry name" value="Ig_I-set"/>
</dbReference>
<dbReference type="InterPro" id="IPR003599">
    <property type="entry name" value="Ig_sub"/>
</dbReference>
<dbReference type="InterPro" id="IPR003598">
    <property type="entry name" value="Ig_sub2"/>
</dbReference>
<dbReference type="PANTHER" id="PTHR11640">
    <property type="entry name" value="NEPHRIN"/>
    <property type="match status" value="1"/>
</dbReference>
<dbReference type="PANTHER" id="PTHR11640:SF157">
    <property type="entry name" value="V-SET AND IMMUNOGLOBULIN DOMAIN-CONTAINING PROTEIN 10"/>
    <property type="match status" value="1"/>
</dbReference>
<dbReference type="Pfam" id="PF07679">
    <property type="entry name" value="I-set"/>
    <property type="match status" value="1"/>
</dbReference>
<dbReference type="Pfam" id="PF13927">
    <property type="entry name" value="Ig_3"/>
    <property type="match status" value="1"/>
</dbReference>
<dbReference type="SMART" id="SM00409">
    <property type="entry name" value="IG"/>
    <property type="match status" value="3"/>
</dbReference>
<dbReference type="SMART" id="SM00408">
    <property type="entry name" value="IGc2"/>
    <property type="match status" value="3"/>
</dbReference>
<dbReference type="SUPFAM" id="SSF48726">
    <property type="entry name" value="Immunoglobulin"/>
    <property type="match status" value="4"/>
</dbReference>
<dbReference type="PROSITE" id="PS50835">
    <property type="entry name" value="IG_LIKE"/>
    <property type="match status" value="3"/>
</dbReference>
<protein>
    <recommendedName>
        <fullName>V-set and immunoglobulin domain-containing protein 10</fullName>
    </recommendedName>
</protein>
<proteinExistence type="evidence at transcript level"/>
<comment type="subcellular location">
    <subcellularLocation>
        <location evidence="3">Membrane</location>
        <topology evidence="3">Single-pass type I membrane protein</topology>
    </subcellularLocation>
</comment>
<name>VSI10_DANRE</name>
<reference key="1">
    <citation type="journal article" date="2013" name="Nature">
        <title>The zebrafish reference genome sequence and its relationship to the human genome.</title>
        <authorList>
            <person name="Howe K."/>
            <person name="Clark M.D."/>
            <person name="Torroja C.F."/>
            <person name="Torrance J."/>
            <person name="Berthelot C."/>
            <person name="Muffato M."/>
            <person name="Collins J.E."/>
            <person name="Humphray S."/>
            <person name="McLaren K."/>
            <person name="Matthews L."/>
            <person name="McLaren S."/>
            <person name="Sealy I."/>
            <person name="Caccamo M."/>
            <person name="Churcher C."/>
            <person name="Scott C."/>
            <person name="Barrett J.C."/>
            <person name="Koch R."/>
            <person name="Rauch G.J."/>
            <person name="White S."/>
            <person name="Chow W."/>
            <person name="Kilian B."/>
            <person name="Quintais L.T."/>
            <person name="Guerra-Assuncao J.A."/>
            <person name="Zhou Y."/>
            <person name="Gu Y."/>
            <person name="Yen J."/>
            <person name="Vogel J.H."/>
            <person name="Eyre T."/>
            <person name="Redmond S."/>
            <person name="Banerjee R."/>
            <person name="Chi J."/>
            <person name="Fu B."/>
            <person name="Langley E."/>
            <person name="Maguire S.F."/>
            <person name="Laird G.K."/>
            <person name="Lloyd D."/>
            <person name="Kenyon E."/>
            <person name="Donaldson S."/>
            <person name="Sehra H."/>
            <person name="Almeida-King J."/>
            <person name="Loveland J."/>
            <person name="Trevanion S."/>
            <person name="Jones M."/>
            <person name="Quail M."/>
            <person name="Willey D."/>
            <person name="Hunt A."/>
            <person name="Burton J."/>
            <person name="Sims S."/>
            <person name="McLay K."/>
            <person name="Plumb B."/>
            <person name="Davis J."/>
            <person name="Clee C."/>
            <person name="Oliver K."/>
            <person name="Clark R."/>
            <person name="Riddle C."/>
            <person name="Elliot D."/>
            <person name="Threadgold G."/>
            <person name="Harden G."/>
            <person name="Ware D."/>
            <person name="Begum S."/>
            <person name="Mortimore B."/>
            <person name="Kerry G."/>
            <person name="Heath P."/>
            <person name="Phillimore B."/>
            <person name="Tracey A."/>
            <person name="Corby N."/>
            <person name="Dunn M."/>
            <person name="Johnson C."/>
            <person name="Wood J."/>
            <person name="Clark S."/>
            <person name="Pelan S."/>
            <person name="Griffiths G."/>
            <person name="Smith M."/>
            <person name="Glithero R."/>
            <person name="Howden P."/>
            <person name="Barker N."/>
            <person name="Lloyd C."/>
            <person name="Stevens C."/>
            <person name="Harley J."/>
            <person name="Holt K."/>
            <person name="Panagiotidis G."/>
            <person name="Lovell J."/>
            <person name="Beasley H."/>
            <person name="Henderson C."/>
            <person name="Gordon D."/>
            <person name="Auger K."/>
            <person name="Wright D."/>
            <person name="Collins J."/>
            <person name="Raisen C."/>
            <person name="Dyer L."/>
            <person name="Leung K."/>
            <person name="Robertson L."/>
            <person name="Ambridge K."/>
            <person name="Leongamornlert D."/>
            <person name="McGuire S."/>
            <person name="Gilderthorp R."/>
            <person name="Griffiths C."/>
            <person name="Manthravadi D."/>
            <person name="Nichol S."/>
            <person name="Barker G."/>
            <person name="Whitehead S."/>
            <person name="Kay M."/>
            <person name="Brown J."/>
            <person name="Murnane C."/>
            <person name="Gray E."/>
            <person name="Humphries M."/>
            <person name="Sycamore N."/>
            <person name="Barker D."/>
            <person name="Saunders D."/>
            <person name="Wallis J."/>
            <person name="Babbage A."/>
            <person name="Hammond S."/>
            <person name="Mashreghi-Mohammadi M."/>
            <person name="Barr L."/>
            <person name="Martin S."/>
            <person name="Wray P."/>
            <person name="Ellington A."/>
            <person name="Matthews N."/>
            <person name="Ellwood M."/>
            <person name="Woodmansey R."/>
            <person name="Clark G."/>
            <person name="Cooper J."/>
            <person name="Tromans A."/>
            <person name="Grafham D."/>
            <person name="Skuce C."/>
            <person name="Pandian R."/>
            <person name="Andrews R."/>
            <person name="Harrison E."/>
            <person name="Kimberley A."/>
            <person name="Garnett J."/>
            <person name="Fosker N."/>
            <person name="Hall R."/>
            <person name="Garner P."/>
            <person name="Kelly D."/>
            <person name="Bird C."/>
            <person name="Palmer S."/>
            <person name="Gehring I."/>
            <person name="Berger A."/>
            <person name="Dooley C.M."/>
            <person name="Ersan-Urun Z."/>
            <person name="Eser C."/>
            <person name="Geiger H."/>
            <person name="Geisler M."/>
            <person name="Karotki L."/>
            <person name="Kirn A."/>
            <person name="Konantz J."/>
            <person name="Konantz M."/>
            <person name="Oberlander M."/>
            <person name="Rudolph-Geiger S."/>
            <person name="Teucke M."/>
            <person name="Lanz C."/>
            <person name="Raddatz G."/>
            <person name="Osoegawa K."/>
            <person name="Zhu B."/>
            <person name="Rapp A."/>
            <person name="Widaa S."/>
            <person name="Langford C."/>
            <person name="Yang F."/>
            <person name="Schuster S.C."/>
            <person name="Carter N.P."/>
            <person name="Harrow J."/>
            <person name="Ning Z."/>
            <person name="Herrero J."/>
            <person name="Searle S.M."/>
            <person name="Enright A."/>
            <person name="Geisler R."/>
            <person name="Plasterk R.H."/>
            <person name="Lee C."/>
            <person name="Westerfield M."/>
            <person name="de Jong P.J."/>
            <person name="Zon L.I."/>
            <person name="Postlethwait J.H."/>
            <person name="Nusslein-Volhard C."/>
            <person name="Hubbard T.J."/>
            <person name="Roest Crollius H."/>
            <person name="Rogers J."/>
            <person name="Stemple D.L."/>
        </authorList>
    </citation>
    <scope>NUCLEOTIDE SEQUENCE [LARGE SCALE GENOMIC DNA]</scope>
    <source>
        <strain>Tuebingen</strain>
    </source>
</reference>
<organism>
    <name type="scientific">Danio rerio</name>
    <name type="common">Zebrafish</name>
    <name type="synonym">Brachydanio rerio</name>
    <dbReference type="NCBI Taxonomy" id="7955"/>
    <lineage>
        <taxon>Eukaryota</taxon>
        <taxon>Metazoa</taxon>
        <taxon>Chordata</taxon>
        <taxon>Craniata</taxon>
        <taxon>Vertebrata</taxon>
        <taxon>Euteleostomi</taxon>
        <taxon>Actinopterygii</taxon>
        <taxon>Neopterygii</taxon>
        <taxon>Teleostei</taxon>
        <taxon>Ostariophysi</taxon>
        <taxon>Cypriniformes</taxon>
        <taxon>Danionidae</taxon>
        <taxon>Danioninae</taxon>
        <taxon>Danio</taxon>
    </lineage>
</organism>
<feature type="signal peptide" evidence="1">
    <location>
        <begin position="1"/>
        <end position="18"/>
    </location>
</feature>
<feature type="chain" id="PRO_0000395115" description="V-set and immunoglobulin domain-containing protein 10">
    <location>
        <begin position="19"/>
        <end position="529"/>
    </location>
</feature>
<feature type="topological domain" description="Extracellular" evidence="1">
    <location>
        <begin position="21"/>
        <end position="411"/>
    </location>
</feature>
<feature type="transmembrane region" description="Helical" evidence="1">
    <location>
        <begin position="412"/>
        <end position="432"/>
    </location>
</feature>
<feature type="topological domain" description="Cytoplasmic" evidence="1">
    <location>
        <begin position="433"/>
        <end position="529"/>
    </location>
</feature>
<feature type="domain" description="Ig-like C2-type 1">
    <location>
        <begin position="19"/>
        <end position="110"/>
    </location>
</feature>
<feature type="domain" description="Ig-like C2-type 2">
    <location>
        <begin position="129"/>
        <end position="217"/>
    </location>
</feature>
<feature type="domain" description="Ig-like C2-type 3">
    <location>
        <begin position="317"/>
        <end position="403"/>
    </location>
</feature>
<feature type="glycosylation site" description="N-linked (GlcNAc...) asparagine" evidence="1">
    <location>
        <position position="34"/>
    </location>
</feature>
<feature type="glycosylation site" description="N-linked (GlcNAc...) asparagine" evidence="1">
    <location>
        <position position="35"/>
    </location>
</feature>
<feature type="glycosylation site" description="N-linked (GlcNAc...) asparagine" evidence="1">
    <location>
        <position position="46"/>
    </location>
</feature>
<feature type="glycosylation site" description="N-linked (GlcNAc...) asparagine" evidence="1">
    <location>
        <position position="135"/>
    </location>
</feature>
<feature type="glycosylation site" description="N-linked (GlcNAc...) asparagine" evidence="1">
    <location>
        <position position="147"/>
    </location>
</feature>
<feature type="glycosylation site" description="N-linked (GlcNAc...) asparagine" evidence="1">
    <location>
        <position position="159"/>
    </location>
</feature>
<feature type="glycosylation site" description="N-linked (GlcNAc...) asparagine" evidence="1">
    <location>
        <position position="211"/>
    </location>
</feature>
<feature type="glycosylation site" description="N-linked (GlcNAc...) asparagine" evidence="1">
    <location>
        <position position="269"/>
    </location>
</feature>
<feature type="glycosylation site" description="N-linked (GlcNAc...) asparagine" evidence="1">
    <location>
        <position position="280"/>
    </location>
</feature>
<feature type="glycosylation site" description="N-linked (GlcNAc...) asparagine" evidence="1">
    <location>
        <position position="284"/>
    </location>
</feature>
<feature type="glycosylation site" description="N-linked (GlcNAc...) asparagine" evidence="1">
    <location>
        <position position="330"/>
    </location>
</feature>
<feature type="glycosylation site" description="N-linked (GlcNAc...) asparagine" evidence="1">
    <location>
        <position position="357"/>
    </location>
</feature>
<feature type="glycosylation site" description="N-linked (GlcNAc...) asparagine" evidence="1">
    <location>
        <position position="376"/>
    </location>
</feature>
<feature type="disulfide bond" evidence="2">
    <location>
        <begin position="40"/>
        <end position="96"/>
    </location>
</feature>
<feature type="disulfide bond" evidence="2">
    <location>
        <begin position="150"/>
        <end position="199"/>
    </location>
</feature>
<feature type="disulfide bond" evidence="2">
    <location>
        <begin position="335"/>
        <end position="387"/>
    </location>
</feature>
<sequence>MMITSAVVLYLLLLSHQTVSEEQVQQFVIGEKGNNTTLHCLDHPVNASSVLYQWKKDGAVVATQNPPNPSVHLSISENGFLRISGLQLIDEGLYECESQAKGGRSWQTLSKIQLTIAAGPTGVSLDISPATFLNNGTLFVHKGSNVNFSCSSESNPSQNLTWTVDNLASDNPEREFGSKSPLAFSITNIQPLDQGTYTCTSQNTLSRRTANKTQELLVYYAPERHPECSWELGDKPSDVLFICSWFGGYPVPTLTWQEVEGAAEGPTINLTTSQQTEELNVSVNRSILHDGDKVKCTGHHVTGVEKSCSFTLKIPYPTGQPLATALEGTNITISCTETSSLPPAKTVWKKNDDLIENTSKYIVQENRPALTLTIVNVTKADEGVYYCYSENPLGARELEVYLNVKTSAGNGGAIVGIFVSVLVMMIGIVVGVTVYTKRDRICIGLRFSQLDDDRVDVLSLVDSDEEEIFHEAVPRLPPVTNGHATTLVEIHRIPSCDHEDIADSTEQSDQTRANLTEAGPQRAELQPAV</sequence>
<accession>B0CLX4</accession>
<evidence type="ECO:0000255" key="1"/>
<evidence type="ECO:0000255" key="2">
    <source>
        <dbReference type="PROSITE-ProRule" id="PRU00114"/>
    </source>
</evidence>
<evidence type="ECO:0000305" key="3"/>
<gene>
    <name type="primary">vsig10</name>
    <name type="ORF">si:ch73-13b6.3</name>
</gene>